<name>VF123_ASFM2</name>
<organismHost>
    <name type="scientific">Ornithodoros</name>
    <name type="common">relapsing fever ticks</name>
    <dbReference type="NCBI Taxonomy" id="6937"/>
</organismHost>
<organismHost>
    <name type="scientific">Phacochoerus aethiopicus</name>
    <name type="common">Warthog</name>
    <dbReference type="NCBI Taxonomy" id="85517"/>
</organismHost>
<organismHost>
    <name type="scientific">Phacochoerus africanus</name>
    <name type="common">Warthog</name>
    <dbReference type="NCBI Taxonomy" id="41426"/>
</organismHost>
<organismHost>
    <name type="scientific">Potamochoerus larvatus</name>
    <name type="common">Bushpig</name>
    <dbReference type="NCBI Taxonomy" id="273792"/>
</organismHost>
<organismHost>
    <name type="scientific">Sus scrofa</name>
    <name type="common">Pig</name>
    <dbReference type="NCBI Taxonomy" id="9823"/>
</organismHost>
<accession>P0CA27</accession>
<dbReference type="EMBL" id="AY261361">
    <property type="status" value="NOT_ANNOTATED_CDS"/>
    <property type="molecule type" value="Genomic_DNA"/>
</dbReference>
<dbReference type="SMR" id="P0CA27"/>
<dbReference type="Proteomes" id="UP000000860">
    <property type="component" value="Segment"/>
</dbReference>
<dbReference type="GO" id="GO:0033644">
    <property type="term" value="C:host cell membrane"/>
    <property type="evidence" value="ECO:0007669"/>
    <property type="project" value="UniProtKB-SubCell"/>
</dbReference>
<dbReference type="GO" id="GO:0016020">
    <property type="term" value="C:membrane"/>
    <property type="evidence" value="ECO:0007669"/>
    <property type="project" value="UniProtKB-KW"/>
</dbReference>
<dbReference type="GO" id="GO:0044423">
    <property type="term" value="C:virion component"/>
    <property type="evidence" value="ECO:0007669"/>
    <property type="project" value="UniProtKB-KW"/>
</dbReference>
<proteinExistence type="inferred from homology"/>
<organism>
    <name type="scientific">African swine fever virus (isolate Tick/Malawi/Lil 20-1/1983)</name>
    <name type="common">ASFV</name>
    <dbReference type="NCBI Taxonomy" id="10500"/>
    <lineage>
        <taxon>Viruses</taxon>
        <taxon>Varidnaviria</taxon>
        <taxon>Bamfordvirae</taxon>
        <taxon>Nucleocytoviricota</taxon>
        <taxon>Pokkesviricetes</taxon>
        <taxon>Asfuvirales</taxon>
        <taxon>Asfarviridae</taxon>
        <taxon>Asfivirus</taxon>
        <taxon>African swine fever virus</taxon>
    </lineage>
</organism>
<sequence>MPSTGTLVIIFAIVLILCIMLLFFYKTVEAGKPSVLPPPIPPPTPPPSKKKYDHNEYMEKTDLEPEVKKNHRKWANEAEHLISSSVKGLENLDEAAFLANHKGHGFRTFEHAKSLFKEFLKKY</sequence>
<reference key="1">
    <citation type="submission" date="2003-03" db="EMBL/GenBank/DDBJ databases">
        <title>African swine fever virus genomes.</title>
        <authorList>
            <person name="Kutish G.F."/>
            <person name="Rock D.L."/>
        </authorList>
    </citation>
    <scope>NUCLEOTIDE SEQUENCE [LARGE SCALE GENOMIC DNA]</scope>
</reference>
<protein>
    <recommendedName>
        <fullName>Uncharacterized protein CP123L</fullName>
        <shortName>pCP123L</shortName>
    </recommendedName>
</protein>
<comment type="subcellular location">
    <subcellularLocation>
        <location evidence="4">Host membrane</location>
        <topology evidence="4">Single-pass membrane protein</topology>
    </subcellularLocation>
    <subcellularLocation>
        <location evidence="1">Virion</location>
    </subcellularLocation>
</comment>
<comment type="induction">
    <text evidence="4">Expressed in the late phase of the viral replicative cycle.</text>
</comment>
<comment type="similarity">
    <text evidence="4">Belongs to the asfivirus CP123L family.</text>
</comment>
<evidence type="ECO:0000250" key="1">
    <source>
        <dbReference type="UniProtKB" id="Q65178"/>
    </source>
</evidence>
<evidence type="ECO:0000255" key="2"/>
<evidence type="ECO:0000256" key="3">
    <source>
        <dbReference type="SAM" id="MobiDB-lite"/>
    </source>
</evidence>
<evidence type="ECO:0000305" key="4"/>
<keyword id="KW-1043">Host membrane</keyword>
<keyword id="KW-0426">Late protein</keyword>
<keyword id="KW-0472">Membrane</keyword>
<keyword id="KW-0812">Transmembrane</keyword>
<keyword id="KW-1133">Transmembrane helix</keyword>
<keyword id="KW-0946">Virion</keyword>
<feature type="chain" id="PRO_0000373492" description="Uncharacterized protein CP123L">
    <location>
        <begin position="1"/>
        <end position="123"/>
    </location>
</feature>
<feature type="transmembrane region" description="Helical" evidence="2">
    <location>
        <begin position="5"/>
        <end position="25"/>
    </location>
</feature>
<feature type="region of interest" description="Disordered" evidence="3">
    <location>
        <begin position="32"/>
        <end position="53"/>
    </location>
</feature>
<feature type="compositionally biased region" description="Pro residues" evidence="3">
    <location>
        <begin position="35"/>
        <end position="47"/>
    </location>
</feature>
<gene>
    <name type="ordered locus">Mal-099</name>
</gene>